<protein>
    <recommendedName>
        <fullName evidence="1">Siroheme synthase</fullName>
    </recommendedName>
    <domain>
        <recommendedName>
            <fullName evidence="1">Uroporphyrinogen-III C-methyltransferase</fullName>
            <shortName evidence="1">Urogen III methylase</shortName>
            <ecNumber evidence="2">2.1.1.107</ecNumber>
        </recommendedName>
        <alternativeName>
            <fullName evidence="1">SUMT</fullName>
        </alternativeName>
        <alternativeName>
            <fullName evidence="1">Uroporphyrinogen III methylase</fullName>
            <shortName evidence="1">UROM</shortName>
        </alternativeName>
    </domain>
    <domain>
        <recommendedName>
            <fullName evidence="1">Precorrin-2 dehydrogenase</fullName>
            <ecNumber evidence="2">1.3.1.76</ecNumber>
        </recommendedName>
    </domain>
    <domain>
        <recommendedName>
            <fullName evidence="1">Sirohydrochlorin ferrochelatase</fullName>
            <ecNumber evidence="2">4.99.1.4</ecNumber>
        </recommendedName>
    </domain>
</protein>
<name>CYSG_SALTY</name>
<feature type="chain" id="PRO_0000150380" description="Siroheme synthase">
    <location>
        <begin position="1"/>
        <end position="457"/>
    </location>
</feature>
<feature type="region of interest" description="Precorrin-2 dehydrogenase /sirohydrochlorin ferrochelatase">
    <location>
        <begin position="4"/>
        <end position="202"/>
    </location>
</feature>
<feature type="region of interest" description="Uroporphyrinogen-III C-methyltransferase">
    <location>
        <begin position="216"/>
        <end position="448"/>
    </location>
</feature>
<feature type="active site" description="Proton acceptor" evidence="2">
    <location>
        <position position="248"/>
    </location>
</feature>
<feature type="active site" description="Proton donor" evidence="2">
    <location>
        <position position="270"/>
    </location>
</feature>
<feature type="binding site" evidence="2">
    <location>
        <begin position="22"/>
        <end position="23"/>
    </location>
    <ligand>
        <name>NAD(+)</name>
        <dbReference type="ChEBI" id="CHEBI:57540"/>
    </ligand>
</feature>
<feature type="binding site" evidence="2">
    <location>
        <begin position="43"/>
        <end position="44"/>
    </location>
    <ligand>
        <name>NAD(+)</name>
        <dbReference type="ChEBI" id="CHEBI:57540"/>
    </ligand>
</feature>
<feature type="binding site" evidence="2">
    <location>
        <position position="225"/>
    </location>
    <ligand>
        <name>S-adenosyl-L-methionine</name>
        <dbReference type="ChEBI" id="CHEBI:59789"/>
    </ligand>
</feature>
<feature type="binding site" evidence="2">
    <location>
        <begin position="301"/>
        <end position="303"/>
    </location>
    <ligand>
        <name>S-adenosyl-L-methionine</name>
        <dbReference type="ChEBI" id="CHEBI:59789"/>
    </ligand>
</feature>
<feature type="binding site" evidence="2">
    <location>
        <position position="306"/>
    </location>
    <ligand>
        <name>S-adenosyl-L-methionine</name>
        <dbReference type="ChEBI" id="CHEBI:59789"/>
    </ligand>
</feature>
<feature type="binding site" evidence="2">
    <location>
        <begin position="331"/>
        <end position="332"/>
    </location>
    <ligand>
        <name>S-adenosyl-L-methionine</name>
        <dbReference type="ChEBI" id="CHEBI:59789"/>
    </ligand>
</feature>
<feature type="binding site" evidence="2">
    <location>
        <position position="382"/>
    </location>
    <ligand>
        <name>S-adenosyl-L-methionine</name>
        <dbReference type="ChEBI" id="CHEBI:59789"/>
    </ligand>
</feature>
<feature type="binding site" evidence="2">
    <location>
        <position position="411"/>
    </location>
    <ligand>
        <name>S-adenosyl-L-methionine</name>
        <dbReference type="ChEBI" id="CHEBI:59789"/>
    </ligand>
</feature>
<feature type="binding site" evidence="2">
    <location>
        <position position="437"/>
    </location>
    <ligand>
        <name>S-adenosyl-L-methionine</name>
        <dbReference type="ChEBI" id="CHEBI:59789"/>
    </ligand>
</feature>
<feature type="modified residue" description="Phosphoserine" evidence="2">
    <location>
        <position position="128"/>
    </location>
</feature>
<feature type="mutagenesis site" description="Abolishes the methyltransferase activity and increases 3 and 4-fold the dehydrogenase and ferrochelatase activities, respectively." evidence="2">
    <original>S</original>
    <variation>A</variation>
    <location>
        <position position="128"/>
    </location>
</feature>
<feature type="mutagenesis site" description="Abolishes the methyltransferase activity and reduces 10 and 5-fold the dehydrogenase and ferrochelatase activities, respectively." evidence="2">
    <original>S</original>
    <variation>D</variation>
    <location>
        <position position="128"/>
    </location>
</feature>
<feature type="mutagenesis site" description="Abolishes the dehydrogenase and ferrochelatase activities and reduces 6-fold the methyltransferase activity." evidence="2">
    <original>L</original>
    <variation>A</variation>
    <location>
        <position position="250"/>
    </location>
</feature>
<feature type="mutagenesis site" description="Abolishes the methyltransferase, dehydrogenase and ferrochelatase activities." evidence="2">
    <original>K</original>
    <variation>I</variation>
    <location>
        <position position="270"/>
    </location>
</feature>
<feature type="mutagenesis site" description="Abolishes the dehydrogenase and ferrochelatase activities and reduces 10-fold the methyltransferase activity." evidence="2">
    <original>N</original>
    <variation>A</variation>
    <location>
        <position position="385"/>
    </location>
</feature>
<feature type="strand" evidence="6">
    <location>
        <begin position="4"/>
        <end position="8"/>
    </location>
</feature>
<feature type="strand" evidence="6">
    <location>
        <begin position="14"/>
        <end position="18"/>
    </location>
</feature>
<feature type="helix" evidence="6">
    <location>
        <begin position="22"/>
        <end position="33"/>
    </location>
</feature>
<feature type="strand" evidence="6">
    <location>
        <begin position="37"/>
        <end position="44"/>
    </location>
</feature>
<feature type="helix" evidence="6">
    <location>
        <begin position="47"/>
        <end position="54"/>
    </location>
</feature>
<feature type="strand" evidence="6">
    <location>
        <begin position="57"/>
        <end position="64"/>
    </location>
</feature>
<feature type="helix" evidence="6">
    <location>
        <begin position="67"/>
        <end position="70"/>
    </location>
</feature>
<feature type="strand" evidence="6">
    <location>
        <begin position="74"/>
        <end position="78"/>
    </location>
</feature>
<feature type="helix" evidence="6">
    <location>
        <begin position="83"/>
        <end position="94"/>
    </location>
</feature>
<feature type="turn" evidence="6">
    <location>
        <begin position="95"/>
        <end position="97"/>
    </location>
</feature>
<feature type="strand" evidence="6">
    <location>
        <begin position="99"/>
        <end position="102"/>
    </location>
</feature>
<feature type="strand" evidence="6">
    <location>
        <begin position="108"/>
        <end position="112"/>
    </location>
</feature>
<feature type="strand" evidence="6">
    <location>
        <begin position="115"/>
        <end position="119"/>
    </location>
</feature>
<feature type="strand" evidence="6">
    <location>
        <begin position="122"/>
        <end position="127"/>
    </location>
</feature>
<feature type="turn" evidence="5">
    <location>
        <begin position="129"/>
        <end position="131"/>
    </location>
</feature>
<feature type="helix" evidence="6">
    <location>
        <begin position="133"/>
        <end position="144"/>
    </location>
</feature>
<feature type="helix" evidence="6">
    <location>
        <begin position="151"/>
        <end position="168"/>
    </location>
</feature>
<feature type="helix" evidence="6">
    <location>
        <begin position="172"/>
        <end position="182"/>
    </location>
</feature>
<feature type="helix" evidence="6">
    <location>
        <begin position="186"/>
        <end position="193"/>
    </location>
</feature>
<feature type="helix" evidence="6">
    <location>
        <begin position="197"/>
        <end position="209"/>
    </location>
</feature>
<feature type="strand" evidence="6">
    <location>
        <begin position="217"/>
        <end position="222"/>
    </location>
</feature>
<feature type="strand" evidence="6">
    <location>
        <begin position="224"/>
        <end position="226"/>
    </location>
</feature>
<feature type="helix" evidence="6">
    <location>
        <begin position="228"/>
        <end position="230"/>
    </location>
</feature>
<feature type="helix" evidence="6">
    <location>
        <begin position="233"/>
        <end position="241"/>
    </location>
</feature>
<feature type="strand" evidence="6">
    <location>
        <begin position="243"/>
        <end position="247"/>
    </location>
</feature>
<feature type="helix" evidence="6">
    <location>
        <begin position="253"/>
        <end position="256"/>
    </location>
</feature>
<feature type="strand" evidence="6">
    <location>
        <begin position="263"/>
        <end position="267"/>
    </location>
</feature>
<feature type="helix" evidence="4">
    <location>
        <begin position="271"/>
        <end position="273"/>
    </location>
</feature>
<feature type="helix" evidence="6">
    <location>
        <begin position="279"/>
        <end position="291"/>
    </location>
</feature>
<feature type="strand" evidence="6">
    <location>
        <begin position="295"/>
        <end position="302"/>
    </location>
</feature>
<feature type="strand" evidence="6">
    <location>
        <begin position="306"/>
        <end position="308"/>
    </location>
</feature>
<feature type="helix" evidence="6">
    <location>
        <begin position="310"/>
        <end position="315"/>
    </location>
</feature>
<feature type="turn" evidence="6">
    <location>
        <begin position="316"/>
        <end position="321"/>
    </location>
</feature>
<feature type="strand" evidence="6">
    <location>
        <begin position="324"/>
        <end position="327"/>
    </location>
</feature>
<feature type="helix" evidence="6">
    <location>
        <begin position="332"/>
        <end position="340"/>
    </location>
</feature>
<feature type="turn" evidence="7">
    <location>
        <begin position="347"/>
        <end position="349"/>
    </location>
</feature>
<feature type="strand" evidence="6">
    <location>
        <begin position="351"/>
        <end position="358"/>
    </location>
</feature>
<feature type="strand" evidence="3">
    <location>
        <begin position="359"/>
        <end position="361"/>
    </location>
</feature>
<feature type="helix" evidence="6">
    <location>
        <begin position="368"/>
        <end position="371"/>
    </location>
</feature>
<feature type="strand" evidence="6">
    <location>
        <begin position="374"/>
        <end position="382"/>
    </location>
</feature>
<feature type="helix" evidence="6">
    <location>
        <begin position="384"/>
        <end position="386"/>
    </location>
</feature>
<feature type="helix" evidence="6">
    <location>
        <begin position="387"/>
        <end position="396"/>
    </location>
</feature>
<feature type="strand" evidence="6">
    <location>
        <begin position="404"/>
        <end position="410"/>
    </location>
</feature>
<feature type="strand" evidence="6">
    <location>
        <begin position="417"/>
        <end position="422"/>
    </location>
</feature>
<feature type="helix" evidence="6">
    <location>
        <begin position="423"/>
        <end position="425"/>
    </location>
</feature>
<feature type="helix" evidence="6">
    <location>
        <begin position="426"/>
        <end position="430"/>
    </location>
</feature>
<feature type="strand" evidence="6">
    <location>
        <begin position="435"/>
        <end position="442"/>
    </location>
</feature>
<feature type="helix" evidence="6">
    <location>
        <begin position="443"/>
        <end position="447"/>
    </location>
</feature>
<feature type="helix" evidence="6">
    <location>
        <begin position="448"/>
        <end position="451"/>
    </location>
</feature>
<reference key="1">
    <citation type="journal article" date="1991" name="J. Bacteriol.">
        <title>High-level expression of Escherichia coli NADPH-sulfite reductase: requirement for a cloned cysG plasmid to overcome limiting siroheme cofactor.</title>
        <authorList>
            <person name="Wu J.Y."/>
            <person name="Siegel L.M."/>
            <person name="Kredich N.M."/>
        </authorList>
    </citation>
    <scope>NUCLEOTIDE SEQUENCE [GENOMIC DNA]</scope>
</reference>
<reference key="2">
    <citation type="journal article" date="2001" name="Nature">
        <title>Complete genome sequence of Salmonella enterica serovar Typhimurium LT2.</title>
        <authorList>
            <person name="McClelland M."/>
            <person name="Sanderson K.E."/>
            <person name="Spieth J."/>
            <person name="Clifton S.W."/>
            <person name="Latreille P."/>
            <person name="Courtney L."/>
            <person name="Porwollik S."/>
            <person name="Ali J."/>
            <person name="Dante M."/>
            <person name="Du F."/>
            <person name="Hou S."/>
            <person name="Layman D."/>
            <person name="Leonard S."/>
            <person name="Nguyen C."/>
            <person name="Scott K."/>
            <person name="Holmes A."/>
            <person name="Grewal N."/>
            <person name="Mulvaney E."/>
            <person name="Ryan E."/>
            <person name="Sun H."/>
            <person name="Florea L."/>
            <person name="Miller W."/>
            <person name="Stoneking T."/>
            <person name="Nhan M."/>
            <person name="Waterston R."/>
            <person name="Wilson R.K."/>
        </authorList>
    </citation>
    <scope>NUCLEOTIDE SEQUENCE [LARGE SCALE GENOMIC DNA]</scope>
    <source>
        <strain>LT2 / SGSC1412 / ATCC 700720</strain>
    </source>
</reference>
<reference key="3">
    <citation type="journal article" date="2003" name="Nat. Struct. Biol.">
        <title>CysG structure reveals tetrapyrrole-binding features and novel regulation of siroheme biosynthesis.</title>
        <authorList>
            <person name="Stroupe M.E."/>
            <person name="Leech H.K."/>
            <person name="Daniels D.S."/>
            <person name="Warren M.J."/>
            <person name="Getzoff E.D."/>
        </authorList>
    </citation>
    <scope>X-RAY CRYSTALLOGRAPHY (2.21 ANGSTROMS) OF WILD-TYPE AND OF MUTANT ALA-128 IN COMPLEX WITH S-ADENOSYL-L-HOMOCYSTEINE AND NAD</scope>
    <scope>FUNCTION</scope>
    <scope>CATALYTIC ACTIVITY</scope>
    <scope>MUTAGENESIS OF SER-128; LEU-250; LYS-270 AND ASN-385</scope>
    <scope>ACTIVE SITE</scope>
    <scope>SUBUNIT</scope>
    <scope>PHOSPHORYLATION AT SER-128</scope>
</reference>
<dbReference type="EC" id="2.1.1.107" evidence="2"/>
<dbReference type="EC" id="1.3.1.76" evidence="2"/>
<dbReference type="EC" id="4.99.1.4" evidence="2"/>
<dbReference type="EMBL" id="M64606">
    <property type="protein sequence ID" value="AAA27041.1"/>
    <property type="molecule type" value="Genomic_DNA"/>
</dbReference>
<dbReference type="EMBL" id="AE006468">
    <property type="protein sequence ID" value="AAL22339.1"/>
    <property type="molecule type" value="Genomic_DNA"/>
</dbReference>
<dbReference type="PIR" id="B39200">
    <property type="entry name" value="B39200"/>
</dbReference>
<dbReference type="RefSeq" id="NP_462380.1">
    <property type="nucleotide sequence ID" value="NC_003197.2"/>
</dbReference>
<dbReference type="RefSeq" id="WP_000349895.1">
    <property type="nucleotide sequence ID" value="NC_003197.2"/>
</dbReference>
<dbReference type="PDB" id="1PJQ">
    <property type="method" value="X-ray"/>
    <property type="resolution" value="2.21 A"/>
    <property type="chains" value="A/B=1-457"/>
</dbReference>
<dbReference type="PDB" id="1PJS">
    <property type="method" value="X-ray"/>
    <property type="resolution" value="2.40 A"/>
    <property type="chains" value="A/B=1-457"/>
</dbReference>
<dbReference type="PDB" id="1PJT">
    <property type="method" value="X-ray"/>
    <property type="resolution" value="2.80 A"/>
    <property type="chains" value="A/B=1-457"/>
</dbReference>
<dbReference type="PDB" id="6P5X">
    <property type="method" value="X-ray"/>
    <property type="resolution" value="1.97 A"/>
    <property type="chains" value="A/B=1-457"/>
</dbReference>
<dbReference type="PDB" id="6P5Z">
    <property type="method" value="X-ray"/>
    <property type="resolution" value="2.26 A"/>
    <property type="chains" value="A/B=1-457"/>
</dbReference>
<dbReference type="PDB" id="6P7C">
    <property type="method" value="X-ray"/>
    <property type="resolution" value="2.76 A"/>
    <property type="chains" value="A/B=1-457"/>
</dbReference>
<dbReference type="PDB" id="6P7D">
    <property type="method" value="X-ray"/>
    <property type="resolution" value="2.40 A"/>
    <property type="chains" value="A/B=1-457"/>
</dbReference>
<dbReference type="PDB" id="6PQZ">
    <property type="method" value="X-ray"/>
    <property type="resolution" value="2.23 A"/>
    <property type="chains" value="A/B=1-457"/>
</dbReference>
<dbReference type="PDB" id="6PR0">
    <property type="method" value="X-ray"/>
    <property type="resolution" value="1.90 A"/>
    <property type="chains" value="A/B=1-457"/>
</dbReference>
<dbReference type="PDB" id="6PR1">
    <property type="method" value="X-ray"/>
    <property type="resolution" value="1.82 A"/>
    <property type="chains" value="A/B=1-457"/>
</dbReference>
<dbReference type="PDB" id="6PR2">
    <property type="method" value="X-ray"/>
    <property type="resolution" value="2.16 A"/>
    <property type="chains" value="A/B=1-457"/>
</dbReference>
<dbReference type="PDB" id="6PR3">
    <property type="method" value="X-ray"/>
    <property type="resolution" value="1.96 A"/>
    <property type="chains" value="A/B=1-457"/>
</dbReference>
<dbReference type="PDB" id="6PR4">
    <property type="method" value="X-ray"/>
    <property type="resolution" value="2.24 A"/>
    <property type="chains" value="A/B=1-457"/>
</dbReference>
<dbReference type="PDB" id="6ULU">
    <property type="method" value="X-ray"/>
    <property type="resolution" value="2.76 A"/>
    <property type="chains" value="A/B=1-457"/>
</dbReference>
<dbReference type="PDB" id="6VEB">
    <property type="method" value="X-ray"/>
    <property type="resolution" value="2.55 A"/>
    <property type="chains" value="A/B=1-457"/>
</dbReference>
<dbReference type="PDBsum" id="1PJQ"/>
<dbReference type="PDBsum" id="1PJS"/>
<dbReference type="PDBsum" id="1PJT"/>
<dbReference type="PDBsum" id="6P5X"/>
<dbReference type="PDBsum" id="6P5Z"/>
<dbReference type="PDBsum" id="6P7C"/>
<dbReference type="PDBsum" id="6P7D"/>
<dbReference type="PDBsum" id="6PQZ"/>
<dbReference type="PDBsum" id="6PR0"/>
<dbReference type="PDBsum" id="6PR1"/>
<dbReference type="PDBsum" id="6PR2"/>
<dbReference type="PDBsum" id="6PR3"/>
<dbReference type="PDBsum" id="6PR4"/>
<dbReference type="PDBsum" id="6ULU"/>
<dbReference type="PDBsum" id="6VEB"/>
<dbReference type="SMR" id="P25924"/>
<dbReference type="STRING" id="99287.STM3477"/>
<dbReference type="DrugBank" id="DB04522">
    <property type="generic name" value="Dexfosfoserine"/>
</dbReference>
<dbReference type="DrugBank" id="DB01752">
    <property type="generic name" value="S-adenosyl-L-homocysteine"/>
</dbReference>
<dbReference type="iPTMnet" id="P25924"/>
<dbReference type="PaxDb" id="99287-STM3477"/>
<dbReference type="GeneID" id="1255000"/>
<dbReference type="KEGG" id="stm:STM3477"/>
<dbReference type="PATRIC" id="fig|99287.12.peg.3675"/>
<dbReference type="HOGENOM" id="CLU_011276_2_0_6"/>
<dbReference type="OMA" id="IPYGRFM"/>
<dbReference type="PhylomeDB" id="P25924"/>
<dbReference type="BioCyc" id="MetaCyc:STM3477-MONOMER"/>
<dbReference type="BioCyc" id="SENT99287:STM3477-MONOMER"/>
<dbReference type="UniPathway" id="UPA00148">
    <property type="reaction ID" value="UER00211"/>
</dbReference>
<dbReference type="UniPathway" id="UPA00148">
    <property type="reaction ID" value="UER00222"/>
</dbReference>
<dbReference type="UniPathway" id="UPA00262">
    <property type="reaction ID" value="UER00211"/>
</dbReference>
<dbReference type="UniPathway" id="UPA00262">
    <property type="reaction ID" value="UER00222"/>
</dbReference>
<dbReference type="UniPathway" id="UPA00262">
    <property type="reaction ID" value="UER00376"/>
</dbReference>
<dbReference type="EvolutionaryTrace" id="P25924"/>
<dbReference type="PRO" id="PR:P25924"/>
<dbReference type="Proteomes" id="UP000001014">
    <property type="component" value="Chromosome"/>
</dbReference>
<dbReference type="GO" id="GO:0051287">
    <property type="term" value="F:NAD binding"/>
    <property type="evidence" value="ECO:0007669"/>
    <property type="project" value="InterPro"/>
</dbReference>
<dbReference type="GO" id="GO:0043115">
    <property type="term" value="F:precorrin-2 dehydrogenase activity"/>
    <property type="evidence" value="ECO:0007669"/>
    <property type="project" value="UniProtKB-UniRule"/>
</dbReference>
<dbReference type="GO" id="GO:0051266">
    <property type="term" value="F:sirohydrochlorin ferrochelatase activity"/>
    <property type="evidence" value="ECO:0007669"/>
    <property type="project" value="UniProtKB-EC"/>
</dbReference>
<dbReference type="GO" id="GO:0004851">
    <property type="term" value="F:uroporphyrin-III C-methyltransferase activity"/>
    <property type="evidence" value="ECO:0000318"/>
    <property type="project" value="GO_Central"/>
</dbReference>
<dbReference type="GO" id="GO:0009236">
    <property type="term" value="P:cobalamin biosynthetic process"/>
    <property type="evidence" value="ECO:0007669"/>
    <property type="project" value="UniProtKB-UniRule"/>
</dbReference>
<dbReference type="GO" id="GO:0032259">
    <property type="term" value="P:methylation"/>
    <property type="evidence" value="ECO:0007669"/>
    <property type="project" value="UniProtKB-KW"/>
</dbReference>
<dbReference type="GO" id="GO:0019354">
    <property type="term" value="P:siroheme biosynthetic process"/>
    <property type="evidence" value="ECO:0000318"/>
    <property type="project" value="GO_Central"/>
</dbReference>
<dbReference type="CDD" id="cd11642">
    <property type="entry name" value="SUMT"/>
    <property type="match status" value="1"/>
</dbReference>
<dbReference type="FunFam" id="1.10.8.210:FF:000001">
    <property type="entry name" value="Siroheme synthase"/>
    <property type="match status" value="1"/>
</dbReference>
<dbReference type="FunFam" id="3.30.160.110:FF:000001">
    <property type="entry name" value="Siroheme synthase"/>
    <property type="match status" value="1"/>
</dbReference>
<dbReference type="FunFam" id="3.30.950.10:FF:000001">
    <property type="entry name" value="Siroheme synthase"/>
    <property type="match status" value="1"/>
</dbReference>
<dbReference type="FunFam" id="3.40.1010.10:FF:000001">
    <property type="entry name" value="Siroheme synthase"/>
    <property type="match status" value="1"/>
</dbReference>
<dbReference type="FunFam" id="3.40.50.720:FF:000092">
    <property type="entry name" value="Siroheme synthase"/>
    <property type="match status" value="1"/>
</dbReference>
<dbReference type="Gene3D" id="3.40.1010.10">
    <property type="entry name" value="Cobalt-precorrin-4 Transmethylase, Domain 1"/>
    <property type="match status" value="1"/>
</dbReference>
<dbReference type="Gene3D" id="3.30.950.10">
    <property type="entry name" value="Methyltransferase, Cobalt-precorrin-4 Transmethylase, Domain 2"/>
    <property type="match status" value="1"/>
</dbReference>
<dbReference type="Gene3D" id="3.40.50.720">
    <property type="entry name" value="NAD(P)-binding Rossmann-like Domain"/>
    <property type="match status" value="1"/>
</dbReference>
<dbReference type="Gene3D" id="1.10.8.210">
    <property type="entry name" value="Sirohaem synthase, dimerisation domain"/>
    <property type="match status" value="1"/>
</dbReference>
<dbReference type="Gene3D" id="3.30.160.110">
    <property type="entry name" value="Siroheme synthase, domain 2"/>
    <property type="match status" value="1"/>
</dbReference>
<dbReference type="HAMAP" id="MF_01646">
    <property type="entry name" value="Siroheme_synth"/>
    <property type="match status" value="1"/>
</dbReference>
<dbReference type="InterPro" id="IPR000878">
    <property type="entry name" value="4pyrrol_Mease"/>
</dbReference>
<dbReference type="InterPro" id="IPR035996">
    <property type="entry name" value="4pyrrol_Methylase_sf"/>
</dbReference>
<dbReference type="InterPro" id="IPR014777">
    <property type="entry name" value="4pyrrole_Mease_sub1"/>
</dbReference>
<dbReference type="InterPro" id="IPR014776">
    <property type="entry name" value="4pyrrole_Mease_sub2"/>
</dbReference>
<dbReference type="InterPro" id="IPR006366">
    <property type="entry name" value="CobA/CysG_C"/>
</dbReference>
<dbReference type="InterPro" id="IPR036291">
    <property type="entry name" value="NAD(P)-bd_dom_sf"/>
</dbReference>
<dbReference type="InterPro" id="IPR050161">
    <property type="entry name" value="Siro_Cobalamin_biosynth"/>
</dbReference>
<dbReference type="InterPro" id="IPR037115">
    <property type="entry name" value="Sirohaem_synt_dimer_dom_sf"/>
</dbReference>
<dbReference type="InterPro" id="IPR012409">
    <property type="entry name" value="Sirohaem_synth"/>
</dbReference>
<dbReference type="InterPro" id="IPR028281">
    <property type="entry name" value="Sirohaem_synthase_central"/>
</dbReference>
<dbReference type="InterPro" id="IPR019478">
    <property type="entry name" value="Sirohaem_synthase_dimer_dom"/>
</dbReference>
<dbReference type="InterPro" id="IPR006367">
    <property type="entry name" value="Sirohaem_synthase_N"/>
</dbReference>
<dbReference type="InterPro" id="IPR003043">
    <property type="entry name" value="Uropor_MeTrfase_CS"/>
</dbReference>
<dbReference type="NCBIfam" id="TIGR01469">
    <property type="entry name" value="cobA_cysG_Cterm"/>
    <property type="match status" value="1"/>
</dbReference>
<dbReference type="NCBIfam" id="TIGR01470">
    <property type="entry name" value="cysG_Nterm"/>
    <property type="match status" value="1"/>
</dbReference>
<dbReference type="NCBIfam" id="NF004790">
    <property type="entry name" value="PRK06136.1"/>
    <property type="match status" value="1"/>
</dbReference>
<dbReference type="NCBIfam" id="NF007922">
    <property type="entry name" value="PRK10637.1"/>
    <property type="match status" value="1"/>
</dbReference>
<dbReference type="PANTHER" id="PTHR45790:SF1">
    <property type="entry name" value="SIROHEME SYNTHASE"/>
    <property type="match status" value="1"/>
</dbReference>
<dbReference type="PANTHER" id="PTHR45790">
    <property type="entry name" value="SIROHEME SYNTHASE-RELATED"/>
    <property type="match status" value="1"/>
</dbReference>
<dbReference type="Pfam" id="PF10414">
    <property type="entry name" value="CysG_dimeriser"/>
    <property type="match status" value="1"/>
</dbReference>
<dbReference type="Pfam" id="PF13241">
    <property type="entry name" value="NAD_binding_7"/>
    <property type="match status" value="1"/>
</dbReference>
<dbReference type="Pfam" id="PF14824">
    <property type="entry name" value="Sirohm_synth_M"/>
    <property type="match status" value="1"/>
</dbReference>
<dbReference type="Pfam" id="PF00590">
    <property type="entry name" value="TP_methylase"/>
    <property type="match status" value="1"/>
</dbReference>
<dbReference type="PIRSF" id="PIRSF036426">
    <property type="entry name" value="Sirohaem_synth"/>
    <property type="match status" value="1"/>
</dbReference>
<dbReference type="SUPFAM" id="SSF51735">
    <property type="entry name" value="NAD(P)-binding Rossmann-fold domains"/>
    <property type="match status" value="1"/>
</dbReference>
<dbReference type="SUPFAM" id="SSF75615">
    <property type="entry name" value="Siroheme synthase middle domains-like"/>
    <property type="match status" value="1"/>
</dbReference>
<dbReference type="SUPFAM" id="SSF53790">
    <property type="entry name" value="Tetrapyrrole methylase"/>
    <property type="match status" value="1"/>
</dbReference>
<dbReference type="PROSITE" id="PS00839">
    <property type="entry name" value="SUMT_1"/>
    <property type="match status" value="1"/>
</dbReference>
<dbReference type="PROSITE" id="PS00840">
    <property type="entry name" value="SUMT_2"/>
    <property type="match status" value="1"/>
</dbReference>
<comment type="function">
    <text evidence="2">Multifunctional enzyme that catalyzes the SAM-dependent methylations of uroporphyrinogen III at position C-2 and C-7 to form precorrin-2 via precorrin-1. Then it catalyzes the NAD-dependent ring dehydrogenation of precorrin-2 to yield sirohydrochlorin. Finally, it catalyzes the ferrochelation of sirohydrochlorin to yield siroheme.</text>
</comment>
<comment type="catalytic activity">
    <reaction evidence="2">
        <text>uroporphyrinogen III + 2 S-adenosyl-L-methionine = precorrin-2 + 2 S-adenosyl-L-homocysteine + H(+)</text>
        <dbReference type="Rhea" id="RHEA:32459"/>
        <dbReference type="ChEBI" id="CHEBI:15378"/>
        <dbReference type="ChEBI" id="CHEBI:57308"/>
        <dbReference type="ChEBI" id="CHEBI:57856"/>
        <dbReference type="ChEBI" id="CHEBI:58827"/>
        <dbReference type="ChEBI" id="CHEBI:59789"/>
        <dbReference type="EC" id="2.1.1.107"/>
    </reaction>
</comment>
<comment type="catalytic activity">
    <reaction evidence="2">
        <text>precorrin-2 + NAD(+) = sirohydrochlorin + NADH + 2 H(+)</text>
        <dbReference type="Rhea" id="RHEA:15613"/>
        <dbReference type="ChEBI" id="CHEBI:15378"/>
        <dbReference type="ChEBI" id="CHEBI:57540"/>
        <dbReference type="ChEBI" id="CHEBI:57945"/>
        <dbReference type="ChEBI" id="CHEBI:58351"/>
        <dbReference type="ChEBI" id="CHEBI:58827"/>
        <dbReference type="EC" id="1.3.1.76"/>
    </reaction>
</comment>
<comment type="catalytic activity">
    <reaction evidence="2">
        <text>siroheme + 2 H(+) = sirohydrochlorin + Fe(2+)</text>
        <dbReference type="Rhea" id="RHEA:24360"/>
        <dbReference type="ChEBI" id="CHEBI:15378"/>
        <dbReference type="ChEBI" id="CHEBI:29033"/>
        <dbReference type="ChEBI" id="CHEBI:58351"/>
        <dbReference type="ChEBI" id="CHEBI:60052"/>
        <dbReference type="EC" id="4.99.1.4"/>
    </reaction>
</comment>
<comment type="pathway">
    <text evidence="1">Cofactor biosynthesis; adenosylcobalamin biosynthesis; precorrin-2 from uroporphyrinogen III: step 1/1.</text>
</comment>
<comment type="pathway">
    <text evidence="1">Cofactor biosynthesis; adenosylcobalamin biosynthesis; sirohydrochlorin from precorrin-2: step 1/1.</text>
</comment>
<comment type="pathway">
    <text evidence="1">Porphyrin-containing compound metabolism; siroheme biosynthesis; precorrin-2 from uroporphyrinogen III: step 1/1.</text>
</comment>
<comment type="pathway">
    <text evidence="1">Porphyrin-containing compound metabolism; siroheme biosynthesis; siroheme from sirohydrochlorin: step 1/1.</text>
</comment>
<comment type="pathway">
    <text evidence="1">Porphyrin-containing compound metabolism; siroheme biosynthesis; sirohydrochlorin from precorrin-2: step 1/1.</text>
</comment>
<comment type="subunit">
    <text evidence="2">Homodimer.</text>
</comment>
<comment type="similarity">
    <text evidence="1">In the N-terminal section; belongs to the precorrin-2 dehydrogenase / sirohydrochlorin ferrochelatase family.</text>
</comment>
<comment type="similarity">
    <text evidence="1">In the C-terminal section; belongs to the precorrin methyltransferase family.</text>
</comment>
<proteinExistence type="evidence at protein level"/>
<organism>
    <name type="scientific">Salmonella typhimurium (strain LT2 / SGSC1412 / ATCC 700720)</name>
    <dbReference type="NCBI Taxonomy" id="99287"/>
    <lineage>
        <taxon>Bacteria</taxon>
        <taxon>Pseudomonadati</taxon>
        <taxon>Pseudomonadota</taxon>
        <taxon>Gammaproteobacteria</taxon>
        <taxon>Enterobacterales</taxon>
        <taxon>Enterobacteriaceae</taxon>
        <taxon>Salmonella</taxon>
    </lineage>
</organism>
<sequence length="457" mass="50147">MDHLPIFCQLRDRDCLIVGGGDVAERKARLLLEAGARLTVNALTFIPQFTVWANEGMLTLVEGPFDETLLDSCWLAIAATDDDTVNQRVSDAAESRRIFCNVVDAPKAASFIMPSIIDRSPLMVAVSSGGTSPVLARLLREKLESLLPQHLGQVARYAGQLRARVKKQFATMGERRRFWEKFFVNDRLAQSLANADEKAVNATTERLFSEPLDHRGEVVLVGAGPGDAGLLTLKGLQQIQQADIVVYDRLVSDDIMNLVRRDADRVFVGKRAGYHCVPQEEINQILLREAQKGKRVVRLKGGDPFIFGRGGEELETLCHAGIPFSVVPGITAASGCSAYSGIPLTHRDYAQSVRLVTGHLKTGGELDWENLAAEKQTLVFYMGLNQAATIQEKLIAFGMQADMPVALVENGTSVKQRVVHGVLTQLGELAQQVESPALIIVGRVVALRDKLNWFSNH</sequence>
<gene>
    <name evidence="1" type="primary">cysG</name>
    <name type="ordered locus">STM3477</name>
</gene>
<evidence type="ECO:0000255" key="1">
    <source>
        <dbReference type="HAMAP-Rule" id="MF_01646"/>
    </source>
</evidence>
<evidence type="ECO:0000269" key="2">
    <source>
    </source>
</evidence>
<evidence type="ECO:0007829" key="3">
    <source>
        <dbReference type="PDB" id="1PJQ"/>
    </source>
</evidence>
<evidence type="ECO:0007829" key="4">
    <source>
        <dbReference type="PDB" id="1PJS"/>
    </source>
</evidence>
<evidence type="ECO:0007829" key="5">
    <source>
        <dbReference type="PDB" id="6PQZ"/>
    </source>
</evidence>
<evidence type="ECO:0007829" key="6">
    <source>
        <dbReference type="PDB" id="6PR1"/>
    </source>
</evidence>
<evidence type="ECO:0007829" key="7">
    <source>
        <dbReference type="PDB" id="6PR3"/>
    </source>
</evidence>
<keyword id="KW-0002">3D-structure</keyword>
<keyword id="KW-0169">Cobalamin biosynthesis</keyword>
<keyword id="KW-0456">Lyase</keyword>
<keyword id="KW-0489">Methyltransferase</keyword>
<keyword id="KW-0511">Multifunctional enzyme</keyword>
<keyword id="KW-0520">NAD</keyword>
<keyword id="KW-0560">Oxidoreductase</keyword>
<keyword id="KW-0597">Phosphoprotein</keyword>
<keyword id="KW-0627">Porphyrin biosynthesis</keyword>
<keyword id="KW-1185">Reference proteome</keyword>
<keyword id="KW-0949">S-adenosyl-L-methionine</keyword>
<keyword id="KW-0808">Transferase</keyword>
<accession>P25924</accession>